<keyword id="KW-0963">Cytoplasm</keyword>
<keyword id="KW-0255">Endonuclease</keyword>
<keyword id="KW-0378">Hydrolase</keyword>
<keyword id="KW-0479">Metal-binding</keyword>
<keyword id="KW-0540">Nuclease</keyword>
<keyword id="KW-1185">Reference proteome</keyword>
<keyword id="KW-0690">Ribosome biogenesis</keyword>
<keyword id="KW-0698">rRNA processing</keyword>
<keyword id="KW-0862">Zinc</keyword>
<comment type="function">
    <text evidence="1">Single strand-specific metallo-endoribonuclease involved in late-stage 70S ribosome quality control and in maturation of the 3' terminus of the 16S rRNA.</text>
</comment>
<comment type="cofactor">
    <cofactor evidence="1">
        <name>Zn(2+)</name>
        <dbReference type="ChEBI" id="CHEBI:29105"/>
    </cofactor>
    <text evidence="1">Binds 1 zinc ion.</text>
</comment>
<comment type="subcellular location">
    <subcellularLocation>
        <location evidence="1">Cytoplasm</location>
    </subcellularLocation>
</comment>
<comment type="similarity">
    <text evidence="1">Belongs to the endoribonuclease YbeY family.</text>
</comment>
<comment type="sequence caution" evidence="2">
    <conflict type="frameshift">
        <sequence resource="EMBL-CDS" id="BAB13140"/>
    </conflict>
</comment>
<organism>
    <name type="scientific">Buchnera aphidicola subsp. Acyrthosiphon pisum (strain APS)</name>
    <name type="common">Acyrthosiphon pisum symbiotic bacterium</name>
    <dbReference type="NCBI Taxonomy" id="107806"/>
    <lineage>
        <taxon>Bacteria</taxon>
        <taxon>Pseudomonadati</taxon>
        <taxon>Pseudomonadota</taxon>
        <taxon>Gammaproteobacteria</taxon>
        <taxon>Enterobacterales</taxon>
        <taxon>Erwiniaceae</taxon>
        <taxon>Buchnera</taxon>
    </lineage>
</organism>
<proteinExistence type="inferred from homology"/>
<evidence type="ECO:0000255" key="1">
    <source>
        <dbReference type="HAMAP-Rule" id="MF_00009"/>
    </source>
</evidence>
<evidence type="ECO:0000305" key="2"/>
<sequence length="155" mass="18687">MKNIIINIQYCCKNNKNIPKKLYFKKWIQKILCKKKNINIITIRIVDEWEIKKLNFNYRKKNKPTNILSFPFNKFIKINYKLLGDLVLCKNIIEKESLKYNKSLESHWAHITIHGTLHLLGYDHQNNKEADIMERLENKIMLSLNYKKPHILKSF</sequence>
<accession>P57517</accession>
<protein>
    <recommendedName>
        <fullName evidence="1">Endoribonuclease YbeY</fullName>
        <ecNumber evidence="1">3.1.-.-</ecNumber>
    </recommendedName>
</protein>
<name>YBEY_BUCAI</name>
<dbReference type="EC" id="3.1.-.-" evidence="1"/>
<dbReference type="EMBL" id="BA000003">
    <property type="protein sequence ID" value="BAB13140.1"/>
    <property type="status" value="ALT_FRAME"/>
    <property type="molecule type" value="Genomic_DNA"/>
</dbReference>
<dbReference type="RefSeq" id="NP_240254.1">
    <property type="nucleotide sequence ID" value="NC_002528.1"/>
</dbReference>
<dbReference type="SMR" id="P57517"/>
<dbReference type="STRING" id="563178.BUAP5A_435"/>
<dbReference type="EnsemblBacteria" id="BAB13140">
    <property type="protein sequence ID" value="BAB13140"/>
    <property type="gene ID" value="BAB13140"/>
</dbReference>
<dbReference type="KEGG" id="buc:BU442"/>
<dbReference type="PATRIC" id="fig|107806.10.peg.452"/>
<dbReference type="eggNOG" id="COG0319">
    <property type="taxonomic scope" value="Bacteria"/>
</dbReference>
<dbReference type="HOGENOM" id="CLU_106710_0_2_6"/>
<dbReference type="Proteomes" id="UP000001806">
    <property type="component" value="Chromosome"/>
</dbReference>
<dbReference type="GO" id="GO:0005737">
    <property type="term" value="C:cytoplasm"/>
    <property type="evidence" value="ECO:0007669"/>
    <property type="project" value="UniProtKB-SubCell"/>
</dbReference>
<dbReference type="GO" id="GO:0004222">
    <property type="term" value="F:metalloendopeptidase activity"/>
    <property type="evidence" value="ECO:0007669"/>
    <property type="project" value="InterPro"/>
</dbReference>
<dbReference type="GO" id="GO:0004521">
    <property type="term" value="F:RNA endonuclease activity"/>
    <property type="evidence" value="ECO:0007669"/>
    <property type="project" value="UniProtKB-UniRule"/>
</dbReference>
<dbReference type="GO" id="GO:0008270">
    <property type="term" value="F:zinc ion binding"/>
    <property type="evidence" value="ECO:0007669"/>
    <property type="project" value="UniProtKB-UniRule"/>
</dbReference>
<dbReference type="GO" id="GO:0006364">
    <property type="term" value="P:rRNA processing"/>
    <property type="evidence" value="ECO:0007669"/>
    <property type="project" value="UniProtKB-UniRule"/>
</dbReference>
<dbReference type="Gene3D" id="3.40.390.30">
    <property type="entry name" value="Metalloproteases ('zincins'), catalytic domain"/>
    <property type="match status" value="1"/>
</dbReference>
<dbReference type="HAMAP" id="MF_00009">
    <property type="entry name" value="Endoribonucl_YbeY"/>
    <property type="match status" value="1"/>
</dbReference>
<dbReference type="InterPro" id="IPR023091">
    <property type="entry name" value="MetalPrtase_cat_dom_sf_prd"/>
</dbReference>
<dbReference type="InterPro" id="IPR002036">
    <property type="entry name" value="YbeY"/>
</dbReference>
<dbReference type="InterPro" id="IPR020549">
    <property type="entry name" value="YbeY_CS"/>
</dbReference>
<dbReference type="NCBIfam" id="TIGR00043">
    <property type="entry name" value="rRNA maturation RNase YbeY"/>
    <property type="match status" value="1"/>
</dbReference>
<dbReference type="PANTHER" id="PTHR46986">
    <property type="entry name" value="ENDORIBONUCLEASE YBEY, CHLOROPLASTIC"/>
    <property type="match status" value="1"/>
</dbReference>
<dbReference type="PANTHER" id="PTHR46986:SF1">
    <property type="entry name" value="ENDORIBONUCLEASE YBEY, CHLOROPLASTIC"/>
    <property type="match status" value="1"/>
</dbReference>
<dbReference type="Pfam" id="PF02130">
    <property type="entry name" value="YbeY"/>
    <property type="match status" value="1"/>
</dbReference>
<dbReference type="SUPFAM" id="SSF55486">
    <property type="entry name" value="Metalloproteases ('zincins'), catalytic domain"/>
    <property type="match status" value="1"/>
</dbReference>
<dbReference type="PROSITE" id="PS01306">
    <property type="entry name" value="UPF0054"/>
    <property type="match status" value="1"/>
</dbReference>
<reference key="1">
    <citation type="journal article" date="2000" name="Nature">
        <title>Genome sequence of the endocellular bacterial symbiont of aphids Buchnera sp. APS.</title>
        <authorList>
            <person name="Shigenobu S."/>
            <person name="Watanabe H."/>
            <person name="Hattori M."/>
            <person name="Sakaki Y."/>
            <person name="Ishikawa H."/>
        </authorList>
    </citation>
    <scope>NUCLEOTIDE SEQUENCE [LARGE SCALE GENOMIC DNA]</scope>
    <source>
        <strain>APS</strain>
    </source>
</reference>
<gene>
    <name evidence="1" type="primary">ybeY</name>
    <name type="ordered locus">BU442</name>
</gene>
<feature type="chain" id="PRO_0000102425" description="Endoribonuclease YbeY">
    <location>
        <begin position="1"/>
        <end position="155"/>
    </location>
</feature>
<feature type="binding site" evidence="1">
    <location>
        <position position="114"/>
    </location>
    <ligand>
        <name>Zn(2+)</name>
        <dbReference type="ChEBI" id="CHEBI:29105"/>
        <note>catalytic</note>
    </ligand>
</feature>
<feature type="binding site" evidence="1">
    <location>
        <position position="118"/>
    </location>
    <ligand>
        <name>Zn(2+)</name>
        <dbReference type="ChEBI" id="CHEBI:29105"/>
        <note>catalytic</note>
    </ligand>
</feature>
<feature type="binding site" evidence="1">
    <location>
        <position position="124"/>
    </location>
    <ligand>
        <name>Zn(2+)</name>
        <dbReference type="ChEBI" id="CHEBI:29105"/>
        <note>catalytic</note>
    </ligand>
</feature>